<reference key="1">
    <citation type="journal article" date="2015" name="Genome Announc.">
        <title>Draft genome sequence of the cellulolytic fungus Chaetomium globosum.</title>
        <authorList>
            <person name="Cuomo C.A."/>
            <person name="Untereiner W.A."/>
            <person name="Ma L.-J."/>
            <person name="Grabherr M."/>
            <person name="Birren B.W."/>
        </authorList>
    </citation>
    <scope>NUCLEOTIDE SEQUENCE [LARGE SCALE GENOMIC DNA]</scope>
    <source>
        <strain>ATCC 6205 / CBS 148.51 / DSM 1962 / NBRC 6347 / NRRL 1970</strain>
    </source>
</reference>
<organism>
    <name type="scientific">Chaetomium globosum (strain ATCC 6205 / CBS 148.51 / DSM 1962 / NBRC 6347 / NRRL 1970)</name>
    <name type="common">Soil fungus</name>
    <dbReference type="NCBI Taxonomy" id="306901"/>
    <lineage>
        <taxon>Eukaryota</taxon>
        <taxon>Fungi</taxon>
        <taxon>Dikarya</taxon>
        <taxon>Ascomycota</taxon>
        <taxon>Pezizomycotina</taxon>
        <taxon>Sordariomycetes</taxon>
        <taxon>Sordariomycetidae</taxon>
        <taxon>Sordariales</taxon>
        <taxon>Chaetomiaceae</taxon>
        <taxon>Chaetomium</taxon>
    </lineage>
</organism>
<comment type="function">
    <text evidence="1">Cotranslationally removes the N-terminal methionine from nascent proteins. The N-terminal methionine is often cleaved when the second residue in the primary sequence is small and uncharged (Met-Ala-, Cys, Gly, Pro, Ser, Thr, or Val).</text>
</comment>
<comment type="catalytic activity">
    <reaction evidence="1">
        <text>Release of N-terminal amino acids, preferentially methionine, from peptides and arylamides.</text>
        <dbReference type="EC" id="3.4.11.18"/>
    </reaction>
</comment>
<comment type="cofactor">
    <cofactor evidence="1">
        <name>Co(2+)</name>
        <dbReference type="ChEBI" id="CHEBI:48828"/>
    </cofactor>
    <cofactor evidence="1">
        <name>Zn(2+)</name>
        <dbReference type="ChEBI" id="CHEBI:29105"/>
    </cofactor>
    <cofactor evidence="1">
        <name>Mn(2+)</name>
        <dbReference type="ChEBI" id="CHEBI:29035"/>
    </cofactor>
    <cofactor evidence="1">
        <name>Fe(2+)</name>
        <dbReference type="ChEBI" id="CHEBI:29033"/>
    </cofactor>
    <text evidence="1">Binds 2 divalent metal cations per subunit. Has a high-affinity and a low affinity metal-binding site. The true nature of the physiological cofactor is under debate. The enzyme is active with cobalt, zinc, manganese or divalent iron ions. Most likely, methionine aminopeptidases function as mononuclear Fe(2+)-metalloproteases under physiological conditions, and the catalytically relevant metal-binding site has been assigned to the histidine-containing high-affinity site.</text>
</comment>
<comment type="subcellular location">
    <subcellularLocation>
        <location evidence="1">Cytoplasm</location>
    </subcellularLocation>
</comment>
<comment type="similarity">
    <text evidence="1">Belongs to the peptidase M24A family. Methionine aminopeptidase eukaryotic type 2 subfamily.</text>
</comment>
<evidence type="ECO:0000255" key="1">
    <source>
        <dbReference type="HAMAP-Rule" id="MF_03175"/>
    </source>
</evidence>
<evidence type="ECO:0000256" key="2">
    <source>
        <dbReference type="SAM" id="MobiDB-lite"/>
    </source>
</evidence>
<protein>
    <recommendedName>
        <fullName evidence="1">Methionine aminopeptidase 2-2</fullName>
        <shortName evidence="1">MAP 2-2</shortName>
        <shortName evidence="1">MetAP 2-2</shortName>
        <ecNumber evidence="1">3.4.11.18</ecNumber>
    </recommendedName>
    <alternativeName>
        <fullName evidence="1">Peptidase M</fullName>
    </alternativeName>
</protein>
<accession>Q2GYA8</accession>
<proteinExistence type="inferred from homology"/>
<sequence>MAAQAPPTDELSKLSVEDADNKPQPDASNGNLNHDEDDSEDDAEDASAPAAGGAKKKKKRKPRKKKKNPTQQSDPPRVLISQLFPDKQYPKGEEVEYLNENSYRTTNEEKRHLDNLKSEFLNDYRHAAEAHRQVRQWAAKNIKPGQSLTDIANGIEDSVRALVGHQGLEEGDALIAGMGFPTGLSINHCAAHYTPNAGNKMILQQDDVMKIDFGVQVNGNIVDSAFTMAFNPRYDPLLEAVKAATNAGIKEAGIDVRLGEIGGVIQEVMESYEVEIDGTTYPVKPIRNLNGHTILPYNIHGGKSVPIVKSNDTTKMEEGDVFAIETFGSTGGGHVIEDGEVSHYAKRTDAPKVDLRLSSAKSLLSVINKNFGTLPWCRRYLDRLGQEKYLLGLNNLVSNGIVEAYPPLVDKKGSYTAQFEHTILIRPTVKEVISRGDDF</sequence>
<feature type="chain" id="PRO_0000407604" description="Methionine aminopeptidase 2-2">
    <location>
        <begin position="1"/>
        <end position="439"/>
    </location>
</feature>
<feature type="region of interest" description="Disordered" evidence="2">
    <location>
        <begin position="1"/>
        <end position="90"/>
    </location>
</feature>
<feature type="compositionally biased region" description="Basic and acidic residues" evidence="2">
    <location>
        <begin position="10"/>
        <end position="23"/>
    </location>
</feature>
<feature type="compositionally biased region" description="Acidic residues" evidence="2">
    <location>
        <begin position="35"/>
        <end position="45"/>
    </location>
</feature>
<feature type="compositionally biased region" description="Basic residues" evidence="2">
    <location>
        <begin position="54"/>
        <end position="68"/>
    </location>
</feature>
<feature type="binding site" evidence="1">
    <location>
        <position position="192"/>
    </location>
    <ligand>
        <name>substrate</name>
    </ligand>
</feature>
<feature type="binding site" evidence="1">
    <location>
        <position position="212"/>
    </location>
    <ligand>
        <name>a divalent metal cation</name>
        <dbReference type="ChEBI" id="CHEBI:60240"/>
        <label>1</label>
    </ligand>
</feature>
<feature type="binding site" evidence="1">
    <location>
        <position position="223"/>
    </location>
    <ligand>
        <name>a divalent metal cation</name>
        <dbReference type="ChEBI" id="CHEBI:60240"/>
        <label>1</label>
    </ligand>
</feature>
<feature type="binding site" evidence="1">
    <location>
        <position position="223"/>
    </location>
    <ligand>
        <name>a divalent metal cation</name>
        <dbReference type="ChEBI" id="CHEBI:60240"/>
        <label>2</label>
        <note>catalytic</note>
    </ligand>
</feature>
<feature type="binding site" evidence="1">
    <location>
        <position position="292"/>
    </location>
    <ligand>
        <name>a divalent metal cation</name>
        <dbReference type="ChEBI" id="CHEBI:60240"/>
        <label>2</label>
        <note>catalytic</note>
    </ligand>
</feature>
<feature type="binding site" evidence="1">
    <location>
        <position position="300"/>
    </location>
    <ligand>
        <name>substrate</name>
    </ligand>
</feature>
<feature type="binding site" evidence="1">
    <location>
        <position position="325"/>
    </location>
    <ligand>
        <name>a divalent metal cation</name>
        <dbReference type="ChEBI" id="CHEBI:60240"/>
        <label>2</label>
        <note>catalytic</note>
    </ligand>
</feature>
<feature type="binding site" evidence="1">
    <location>
        <position position="420"/>
    </location>
    <ligand>
        <name>a divalent metal cation</name>
        <dbReference type="ChEBI" id="CHEBI:60240"/>
        <label>1</label>
    </ligand>
</feature>
<feature type="binding site" evidence="1">
    <location>
        <position position="420"/>
    </location>
    <ligand>
        <name>a divalent metal cation</name>
        <dbReference type="ChEBI" id="CHEBI:60240"/>
        <label>2</label>
        <note>catalytic</note>
    </ligand>
</feature>
<keyword id="KW-0031">Aminopeptidase</keyword>
<keyword id="KW-0963">Cytoplasm</keyword>
<keyword id="KW-0378">Hydrolase</keyword>
<keyword id="KW-0479">Metal-binding</keyword>
<keyword id="KW-0645">Protease</keyword>
<keyword id="KW-1185">Reference proteome</keyword>
<name>MAP22_CHAGB</name>
<dbReference type="EC" id="3.4.11.18" evidence="1"/>
<dbReference type="EMBL" id="CH408033">
    <property type="protein sequence ID" value="EAQ85793.1"/>
    <property type="molecule type" value="Genomic_DNA"/>
</dbReference>
<dbReference type="RefSeq" id="XP_001224702.1">
    <property type="nucleotide sequence ID" value="XM_001224701.1"/>
</dbReference>
<dbReference type="SMR" id="Q2GYA8"/>
<dbReference type="FunCoup" id="Q2GYA8">
    <property type="interactions" value="1051"/>
</dbReference>
<dbReference type="STRING" id="306901.Q2GYA8"/>
<dbReference type="MEROPS" id="M24.002"/>
<dbReference type="GeneID" id="4393147"/>
<dbReference type="VEuPathDB" id="FungiDB:CHGG_07046"/>
<dbReference type="eggNOG" id="KOG2775">
    <property type="taxonomic scope" value="Eukaryota"/>
</dbReference>
<dbReference type="HOGENOM" id="CLU_015857_7_1_1"/>
<dbReference type="InParanoid" id="Q2GYA8"/>
<dbReference type="OMA" id="PFAKRWL"/>
<dbReference type="OrthoDB" id="7848262at2759"/>
<dbReference type="Proteomes" id="UP000001056">
    <property type="component" value="Unassembled WGS sequence"/>
</dbReference>
<dbReference type="GO" id="GO:0005737">
    <property type="term" value="C:cytoplasm"/>
    <property type="evidence" value="ECO:0007669"/>
    <property type="project" value="UniProtKB-SubCell"/>
</dbReference>
<dbReference type="GO" id="GO:0004239">
    <property type="term" value="F:initiator methionyl aminopeptidase activity"/>
    <property type="evidence" value="ECO:0007669"/>
    <property type="project" value="UniProtKB-UniRule"/>
</dbReference>
<dbReference type="GO" id="GO:0046872">
    <property type="term" value="F:metal ion binding"/>
    <property type="evidence" value="ECO:0007669"/>
    <property type="project" value="UniProtKB-UniRule"/>
</dbReference>
<dbReference type="GO" id="GO:0070006">
    <property type="term" value="F:metalloaminopeptidase activity"/>
    <property type="evidence" value="ECO:0007669"/>
    <property type="project" value="UniProtKB-UniRule"/>
</dbReference>
<dbReference type="GO" id="GO:0006508">
    <property type="term" value="P:proteolysis"/>
    <property type="evidence" value="ECO:0007669"/>
    <property type="project" value="UniProtKB-KW"/>
</dbReference>
<dbReference type="CDD" id="cd01088">
    <property type="entry name" value="MetAP2"/>
    <property type="match status" value="1"/>
</dbReference>
<dbReference type="Gene3D" id="3.90.230.10">
    <property type="entry name" value="Creatinase/methionine aminopeptidase superfamily"/>
    <property type="match status" value="1"/>
</dbReference>
<dbReference type="Gene3D" id="1.10.10.10">
    <property type="entry name" value="Winged helix-like DNA-binding domain superfamily/Winged helix DNA-binding domain"/>
    <property type="match status" value="1"/>
</dbReference>
<dbReference type="HAMAP" id="MF_03175">
    <property type="entry name" value="MetAP_2_euk"/>
    <property type="match status" value="1"/>
</dbReference>
<dbReference type="InterPro" id="IPR036005">
    <property type="entry name" value="Creatinase/aminopeptidase-like"/>
</dbReference>
<dbReference type="InterPro" id="IPR050247">
    <property type="entry name" value="Met_Aminopeptidase_Type2"/>
</dbReference>
<dbReference type="InterPro" id="IPR000994">
    <property type="entry name" value="Pept_M24"/>
</dbReference>
<dbReference type="InterPro" id="IPR001714">
    <property type="entry name" value="Pept_M24_MAP"/>
</dbReference>
<dbReference type="InterPro" id="IPR002468">
    <property type="entry name" value="Pept_M24A_MAP2"/>
</dbReference>
<dbReference type="InterPro" id="IPR018349">
    <property type="entry name" value="Pept_M24A_MAP2_BS"/>
</dbReference>
<dbReference type="InterPro" id="IPR036388">
    <property type="entry name" value="WH-like_DNA-bd_sf"/>
</dbReference>
<dbReference type="InterPro" id="IPR036390">
    <property type="entry name" value="WH_DNA-bd_sf"/>
</dbReference>
<dbReference type="NCBIfam" id="TIGR00501">
    <property type="entry name" value="met_pdase_II"/>
    <property type="match status" value="1"/>
</dbReference>
<dbReference type="PANTHER" id="PTHR45777">
    <property type="entry name" value="METHIONINE AMINOPEPTIDASE 2"/>
    <property type="match status" value="1"/>
</dbReference>
<dbReference type="PANTHER" id="PTHR45777:SF2">
    <property type="entry name" value="METHIONINE AMINOPEPTIDASE 2"/>
    <property type="match status" value="1"/>
</dbReference>
<dbReference type="Pfam" id="PF00557">
    <property type="entry name" value="Peptidase_M24"/>
    <property type="match status" value="1"/>
</dbReference>
<dbReference type="PRINTS" id="PR00599">
    <property type="entry name" value="MAPEPTIDASE"/>
</dbReference>
<dbReference type="SUPFAM" id="SSF55920">
    <property type="entry name" value="Creatinase/aminopeptidase"/>
    <property type="match status" value="1"/>
</dbReference>
<dbReference type="SUPFAM" id="SSF46785">
    <property type="entry name" value="Winged helix' DNA-binding domain"/>
    <property type="match status" value="1"/>
</dbReference>
<dbReference type="PROSITE" id="PS01202">
    <property type="entry name" value="MAP_2"/>
    <property type="match status" value="1"/>
</dbReference>
<gene>
    <name type="ORF">CHGG_07046</name>
</gene>